<evidence type="ECO:0000250" key="1">
    <source>
        <dbReference type="UniProtKB" id="Q07869"/>
    </source>
</evidence>
<evidence type="ECO:0000255" key="2">
    <source>
        <dbReference type="PROSITE-ProRule" id="PRU00407"/>
    </source>
</evidence>
<evidence type="ECO:0000255" key="3">
    <source>
        <dbReference type="PROSITE-ProRule" id="PRU01189"/>
    </source>
</evidence>
<evidence type="ECO:0000256" key="4">
    <source>
        <dbReference type="SAM" id="MobiDB-lite"/>
    </source>
</evidence>
<evidence type="ECO:0000269" key="5">
    <source>
    </source>
</evidence>
<evidence type="ECO:0000305" key="6"/>
<evidence type="ECO:0000312" key="7">
    <source>
        <dbReference type="EMBL" id="AAG15133.1"/>
    </source>
</evidence>
<evidence type="ECO:0000312" key="8">
    <source>
        <dbReference type="Proteomes" id="UP000001940"/>
    </source>
</evidence>
<evidence type="ECO:0000312" key="9">
    <source>
        <dbReference type="WormBase" id="C29E6.5a"/>
    </source>
</evidence>
<evidence type="ECO:0000312" key="10">
    <source>
        <dbReference type="WormBase" id="C29E6.5b"/>
    </source>
</evidence>
<feature type="chain" id="PRO_0000454970" description="Nuclear hormone receptor family member nhr-43">
    <location>
        <begin position="1"/>
        <end position="449"/>
    </location>
</feature>
<feature type="domain" description="NR LBD" evidence="3">
    <location>
        <begin position="200"/>
        <end position="449"/>
    </location>
</feature>
<feature type="DNA-binding region" description="Nuclear receptor" evidence="2">
    <location>
        <begin position="44"/>
        <end position="122"/>
    </location>
</feature>
<feature type="zinc finger region" description="NR C4-type" evidence="2">
    <location>
        <begin position="47"/>
        <end position="68"/>
    </location>
</feature>
<feature type="zinc finger region" description="NR C4-type" evidence="2">
    <location>
        <begin position="84"/>
        <end position="105"/>
    </location>
</feature>
<feature type="region of interest" description="Disordered" evidence="4">
    <location>
        <begin position="125"/>
        <end position="154"/>
    </location>
</feature>
<feature type="compositionally biased region" description="Basic and acidic residues" evidence="4">
    <location>
        <begin position="125"/>
        <end position="142"/>
    </location>
</feature>
<feature type="splice variant" id="VSP_061438" description="In isoform b.">
    <original>TV</original>
    <variation>M</variation>
    <location>
        <begin position="95"/>
        <end position="96"/>
    </location>
</feature>
<gene>
    <name evidence="9" type="primary">nhr-43</name>
    <name evidence="9" type="ORF">C29E6.5</name>
</gene>
<dbReference type="EMBL" id="AF273784">
    <property type="protein sequence ID" value="AAG15133.1"/>
    <property type="status" value="ALT_INIT"/>
    <property type="molecule type" value="mRNA"/>
</dbReference>
<dbReference type="EMBL" id="BX284604">
    <property type="protein sequence ID" value="CAA96605.1"/>
    <property type="molecule type" value="Genomic_DNA"/>
</dbReference>
<dbReference type="EMBL" id="BX284604">
    <property type="protein sequence ID" value="CDR32746.1"/>
    <property type="molecule type" value="Genomic_DNA"/>
</dbReference>
<dbReference type="PIR" id="T19554">
    <property type="entry name" value="T19554"/>
</dbReference>
<dbReference type="RefSeq" id="NP_001293976.1">
    <molecule id="Q18299-2"/>
    <property type="nucleotide sequence ID" value="NM_001307047.3"/>
</dbReference>
<dbReference type="RefSeq" id="NP_502254.1">
    <molecule id="Q18299-1"/>
    <property type="nucleotide sequence ID" value="NM_069853.6"/>
</dbReference>
<dbReference type="FunCoup" id="Q18299">
    <property type="interactions" value="1349"/>
</dbReference>
<dbReference type="IntAct" id="Q18299">
    <property type="interactions" value="12"/>
</dbReference>
<dbReference type="STRING" id="6239.C29E6.5a.1"/>
<dbReference type="PaxDb" id="6239-C29E6.5"/>
<dbReference type="EnsemblMetazoa" id="C29E6.5a.1">
    <molecule id="Q18299-1"/>
    <property type="protein sequence ID" value="C29E6.5a.1"/>
    <property type="gene ID" value="WBGene00003633"/>
</dbReference>
<dbReference type="EnsemblMetazoa" id="C29E6.5b.1">
    <molecule id="Q18299-2"/>
    <property type="protein sequence ID" value="C29E6.5b.1"/>
    <property type="gene ID" value="WBGene00003633"/>
</dbReference>
<dbReference type="GeneID" id="178121"/>
<dbReference type="KEGG" id="cel:CELE_C29E6.5"/>
<dbReference type="UCSC" id="C29E6.5">
    <molecule id="Q18299-1"/>
    <property type="organism name" value="c. elegans"/>
</dbReference>
<dbReference type="AGR" id="WB:WBGene00003633"/>
<dbReference type="CTD" id="178121"/>
<dbReference type="WormBase" id="C29E6.5a">
    <molecule id="Q18299-1"/>
    <property type="protein sequence ID" value="CE05336"/>
    <property type="gene ID" value="WBGene00003633"/>
    <property type="gene designation" value="nhr-43"/>
</dbReference>
<dbReference type="WormBase" id="C29E6.5b">
    <molecule id="Q18299-2"/>
    <property type="protein sequence ID" value="CE49855"/>
    <property type="gene ID" value="WBGene00003633"/>
    <property type="gene designation" value="nhr-43"/>
</dbReference>
<dbReference type="eggNOG" id="KOG3575">
    <property type="taxonomic scope" value="Eukaryota"/>
</dbReference>
<dbReference type="HOGENOM" id="CLU_007368_7_0_1"/>
<dbReference type="InParanoid" id="Q18299"/>
<dbReference type="OMA" id="WEIESCY"/>
<dbReference type="OrthoDB" id="5819828at2759"/>
<dbReference type="PhylomeDB" id="Q18299"/>
<dbReference type="PRO" id="PR:Q18299"/>
<dbReference type="Proteomes" id="UP000001940">
    <property type="component" value="Chromosome IV"/>
</dbReference>
<dbReference type="Bgee" id="WBGene00003633">
    <property type="expression patterns" value="Expressed in embryo and 3 other cell types or tissues"/>
</dbReference>
<dbReference type="ExpressionAtlas" id="Q18299">
    <property type="expression patterns" value="baseline and differential"/>
</dbReference>
<dbReference type="GO" id="GO:0005634">
    <property type="term" value="C:nucleus"/>
    <property type="evidence" value="ECO:0000318"/>
    <property type="project" value="GO_Central"/>
</dbReference>
<dbReference type="GO" id="GO:0003700">
    <property type="term" value="F:DNA-binding transcription factor activity"/>
    <property type="evidence" value="ECO:0000318"/>
    <property type="project" value="GO_Central"/>
</dbReference>
<dbReference type="GO" id="GO:0004879">
    <property type="term" value="F:nuclear receptor activity"/>
    <property type="evidence" value="ECO:0007669"/>
    <property type="project" value="InterPro"/>
</dbReference>
<dbReference type="GO" id="GO:0000977">
    <property type="term" value="F:RNA polymerase II transcription regulatory region sequence-specific DNA binding"/>
    <property type="evidence" value="ECO:0000314"/>
    <property type="project" value="WormBase"/>
</dbReference>
<dbReference type="GO" id="GO:0008270">
    <property type="term" value="F:zinc ion binding"/>
    <property type="evidence" value="ECO:0007669"/>
    <property type="project" value="UniProtKB-KW"/>
</dbReference>
<dbReference type="GO" id="GO:0006357">
    <property type="term" value="P:regulation of transcription by RNA polymerase II"/>
    <property type="evidence" value="ECO:0000318"/>
    <property type="project" value="GO_Central"/>
</dbReference>
<dbReference type="Gene3D" id="3.30.50.10">
    <property type="entry name" value="Erythroid Transcription Factor GATA-1, subunit A"/>
    <property type="match status" value="1"/>
</dbReference>
<dbReference type="Gene3D" id="1.10.565.10">
    <property type="entry name" value="Retinoid X Receptor"/>
    <property type="match status" value="1"/>
</dbReference>
<dbReference type="InterPro" id="IPR035500">
    <property type="entry name" value="NHR-like_dom_sf"/>
</dbReference>
<dbReference type="InterPro" id="IPR016355">
    <property type="entry name" value="NR5-like"/>
</dbReference>
<dbReference type="InterPro" id="IPR000536">
    <property type="entry name" value="Nucl_hrmn_rcpt_lig-bd"/>
</dbReference>
<dbReference type="InterPro" id="IPR001628">
    <property type="entry name" value="Znf_hrmn_rcpt"/>
</dbReference>
<dbReference type="InterPro" id="IPR013088">
    <property type="entry name" value="Znf_NHR/GATA"/>
</dbReference>
<dbReference type="PANTHER" id="PTHR46011:SF4">
    <property type="entry name" value="NUCLEAR HORMONE RECEPTOR FAMILY MEMBER NHR-43"/>
    <property type="match status" value="1"/>
</dbReference>
<dbReference type="PANTHER" id="PTHR46011">
    <property type="entry name" value="NUCLEAR HORMONE RECEPTOR FAMILY MEMBER NHR-86-RELATED"/>
    <property type="match status" value="1"/>
</dbReference>
<dbReference type="Pfam" id="PF00104">
    <property type="entry name" value="Hormone_recep"/>
    <property type="match status" value="1"/>
</dbReference>
<dbReference type="Pfam" id="PF00105">
    <property type="entry name" value="zf-C4"/>
    <property type="match status" value="1"/>
</dbReference>
<dbReference type="PIRSF" id="PIRSF002530">
    <property type="entry name" value="Nuc_orph_FTZ-F1"/>
    <property type="match status" value="1"/>
</dbReference>
<dbReference type="SMART" id="SM00430">
    <property type="entry name" value="HOLI"/>
    <property type="match status" value="1"/>
</dbReference>
<dbReference type="SMART" id="SM00399">
    <property type="entry name" value="ZnF_C4"/>
    <property type="match status" value="1"/>
</dbReference>
<dbReference type="SUPFAM" id="SSF57716">
    <property type="entry name" value="Glucocorticoid receptor-like (DNA-binding domain)"/>
    <property type="match status" value="1"/>
</dbReference>
<dbReference type="SUPFAM" id="SSF48508">
    <property type="entry name" value="Nuclear receptor ligand-binding domain"/>
    <property type="match status" value="1"/>
</dbReference>
<dbReference type="PROSITE" id="PS51843">
    <property type="entry name" value="NR_LBD"/>
    <property type="match status" value="1"/>
</dbReference>
<dbReference type="PROSITE" id="PS51030">
    <property type="entry name" value="NUCLEAR_REC_DBD_2"/>
    <property type="match status" value="1"/>
</dbReference>
<keyword id="KW-0025">Alternative splicing</keyword>
<keyword id="KW-0238">DNA-binding</keyword>
<keyword id="KW-0479">Metal-binding</keyword>
<keyword id="KW-0539">Nucleus</keyword>
<keyword id="KW-0675">Receptor</keyword>
<keyword id="KW-1185">Reference proteome</keyword>
<keyword id="KW-0804">Transcription</keyword>
<keyword id="KW-0805">Transcription regulation</keyword>
<keyword id="KW-0862">Zinc</keyword>
<keyword id="KW-0863">Zinc-finger</keyword>
<organism evidence="8">
    <name type="scientific">Caenorhabditis elegans</name>
    <dbReference type="NCBI Taxonomy" id="6239"/>
    <lineage>
        <taxon>Eukaryota</taxon>
        <taxon>Metazoa</taxon>
        <taxon>Ecdysozoa</taxon>
        <taxon>Nematoda</taxon>
        <taxon>Chromadorea</taxon>
        <taxon>Rhabditida</taxon>
        <taxon>Rhabditina</taxon>
        <taxon>Rhabditomorpha</taxon>
        <taxon>Rhabditoidea</taxon>
        <taxon>Rhabditidae</taxon>
        <taxon>Peloderinae</taxon>
        <taxon>Caenorhabditis</taxon>
    </lineage>
</organism>
<name>NHR43_CAEEL</name>
<protein>
    <recommendedName>
        <fullName evidence="6">Nuclear hormone receptor family member nhr-43</fullName>
    </recommendedName>
</protein>
<reference evidence="7" key="1">
    <citation type="journal article" date="2005" name="J. Mol. Evol.">
        <title>Explosive lineage-specific expansion of the orphan nuclear receptor HNF4 in nematodes.</title>
        <authorList>
            <person name="Robinson-Rechavi M."/>
            <person name="Maina C.V."/>
            <person name="Gissendanner C.R."/>
            <person name="Laudet V."/>
            <person name="Sluder A."/>
        </authorList>
    </citation>
    <scope>NUCLEOTIDE SEQUENCE [MRNA]</scope>
</reference>
<reference evidence="8" key="2">
    <citation type="journal article" date="1998" name="Science">
        <title>Genome sequence of the nematode C. elegans: a platform for investigating biology.</title>
        <authorList>
            <consortium name="The C. elegans sequencing consortium"/>
        </authorList>
    </citation>
    <scope>NUCLEOTIDE SEQUENCE [LARGE SCALE GENOMIC DNA]</scope>
    <source>
        <strain evidence="8">Bristol N2</strain>
    </source>
</reference>
<reference evidence="6" key="3">
    <citation type="journal article" date="2014" name="BMC Dev. Biol.">
        <title>Multiple transcription factors directly regulate Hox gene lin-39 expression in ventral hypodermal cells of the C. elegans embryo and larva, including the hypodermal fate regulators LIN-26 and ELT-6.</title>
        <authorList>
            <person name="Liu W.J."/>
            <person name="Reece-Hoyes J.S."/>
            <person name="Walhout A.J."/>
            <person name="Eisenmann D.M."/>
        </authorList>
    </citation>
    <scope>FUNCTION</scope>
    <scope>DISRUPTION PHENOTYPE</scope>
</reference>
<sequence>MISGPFLHFDPTVPLQTVMIGHPATSPLSLPSSSSSPTVADPSNIHCRVCERRYDGSQHFGIDICRACAAFFRRSVAVKKTFVCRRGTNKCELNTVSRKTTCQKCRWMRCLLVGLNVDAVVGRRSPDHVKTTSRDESVKKEDEESDTGSEGKSCEDMDVSHPIEQFQQQISFSVHRPIPTIGNPNIYTTRASLINKVLINYNEFTKSRLDVELSLKHMQQDSKVFGSTGIPIVPATREIISEIYQKQFGLLHIFLKNTFDEYAECDVQEQKRICAMFYPVLWEIESCYWTYRNMPVQPEYETLMMCTQTTYIDSKNVRYWLGNTTGLNESDIQAVEARLENLLTKARNLVLEPMHKLIIKEFEFITLLALNIWAPRNHRGCVSEDRAEQVRDALFDDLHYLYCDGLKIDKYSSRMGEMMCLHTEVQNADMSSTIKNILFSDLNAYLYSI</sequence>
<comment type="function">
    <text evidence="1 5">Ligand-activated transcription factor (By similarity). Positively modulates expression of homeobox protein lin-39, perhaps by binding to the sequence motif 5'-TGAC-3' in regulatory regions of the lin-39 gene, acting in the embryo, and also in the vulval lineage (PubMed:24885717).</text>
</comment>
<comment type="subcellular location">
    <subcellularLocation>
        <location evidence="2">Nucleus</location>
    </subcellularLocation>
</comment>
<comment type="alternative products">
    <event type="alternative splicing"/>
    <isoform>
        <id>Q18299-1</id>
        <name evidence="9">a</name>
        <sequence type="displayed"/>
    </isoform>
    <isoform>
        <id>Q18299-2</id>
        <name evidence="10">b</name>
        <sequence type="described" ref="VSP_061438"/>
    </isoform>
</comment>
<comment type="disruption phenotype">
    <text evidence="5">RNAi-mediated knockdown reduces expression of homeobox protein lin-39 in vulval precursor cells at the larval L3 stage.</text>
</comment>
<comment type="sequence caution" evidence="6">
    <conflict type="erroneous initiation">
        <sequence resource="EMBL-CDS" id="AAG15133"/>
    </conflict>
    <text>Extended N-terminus.</text>
</comment>
<accession>Q18299</accession>
<accession>A0A061AJB0</accession>
<accession>Q9GTH4</accession>
<proteinExistence type="evidence at transcript level"/>